<evidence type="ECO:0000255" key="1">
    <source>
        <dbReference type="HAMAP-Rule" id="MF_00023"/>
    </source>
</evidence>
<protein>
    <recommendedName>
        <fullName evidence="1">SsrA-binding protein</fullName>
    </recommendedName>
    <alternativeName>
        <fullName evidence="1">Small protein B</fullName>
    </alternativeName>
</protein>
<reference key="1">
    <citation type="journal article" date="2008" name="J. Bacteriol.">
        <title>Genome sequence of Lactobacillus helveticus: an organism distinguished by selective gene loss and IS element expansion.</title>
        <authorList>
            <person name="Callanan M."/>
            <person name="Kaleta P."/>
            <person name="O'Callaghan J."/>
            <person name="O'Sullivan O."/>
            <person name="Jordan K."/>
            <person name="McAuliffe O."/>
            <person name="Sangrador-Vegas A."/>
            <person name="Slattery L."/>
            <person name="Fitzgerald G.F."/>
            <person name="Beresford T."/>
            <person name="Ross R.P."/>
        </authorList>
    </citation>
    <scope>NUCLEOTIDE SEQUENCE [LARGE SCALE GENOMIC DNA]</scope>
    <source>
        <strain>DPC 4571</strain>
    </source>
</reference>
<comment type="function">
    <text evidence="1">Required for rescue of stalled ribosomes mediated by trans-translation. Binds to transfer-messenger RNA (tmRNA), required for stable association of tmRNA with ribosomes. tmRNA and SmpB together mimic tRNA shape, replacing the anticodon stem-loop with SmpB. tmRNA is encoded by the ssrA gene; the 2 termini fold to resemble tRNA(Ala) and it encodes a 'tag peptide', a short internal open reading frame. During trans-translation Ala-aminoacylated tmRNA acts like a tRNA, entering the A-site of stalled ribosomes, displacing the stalled mRNA. The ribosome then switches to translate the ORF on the tmRNA; the nascent peptide is terminated with the 'tag peptide' encoded by the tmRNA and targeted for degradation. The ribosome is freed to recommence translation, which seems to be the essential function of trans-translation.</text>
</comment>
<comment type="subcellular location">
    <subcellularLocation>
        <location evidence="1">Cytoplasm</location>
    </subcellularLocation>
    <text evidence="1">The tmRNA-SmpB complex associates with stalled 70S ribosomes.</text>
</comment>
<comment type="similarity">
    <text evidence="1">Belongs to the SmpB family.</text>
</comment>
<dbReference type="EMBL" id="CP000517">
    <property type="protein sequence ID" value="ABX26680.1"/>
    <property type="molecule type" value="Genomic_DNA"/>
</dbReference>
<dbReference type="RefSeq" id="WP_003627921.1">
    <property type="nucleotide sequence ID" value="NC_010080.1"/>
</dbReference>
<dbReference type="SMR" id="A8YTT9"/>
<dbReference type="KEGG" id="lhe:lhv_0473"/>
<dbReference type="eggNOG" id="COG0691">
    <property type="taxonomic scope" value="Bacteria"/>
</dbReference>
<dbReference type="HOGENOM" id="CLU_108953_0_0_9"/>
<dbReference type="Proteomes" id="UP000000790">
    <property type="component" value="Chromosome"/>
</dbReference>
<dbReference type="GO" id="GO:0005829">
    <property type="term" value="C:cytosol"/>
    <property type="evidence" value="ECO:0007669"/>
    <property type="project" value="TreeGrafter"/>
</dbReference>
<dbReference type="GO" id="GO:0003723">
    <property type="term" value="F:RNA binding"/>
    <property type="evidence" value="ECO:0007669"/>
    <property type="project" value="UniProtKB-UniRule"/>
</dbReference>
<dbReference type="GO" id="GO:0070929">
    <property type="term" value="P:trans-translation"/>
    <property type="evidence" value="ECO:0007669"/>
    <property type="project" value="UniProtKB-UniRule"/>
</dbReference>
<dbReference type="CDD" id="cd09294">
    <property type="entry name" value="SmpB"/>
    <property type="match status" value="1"/>
</dbReference>
<dbReference type="Gene3D" id="2.40.280.10">
    <property type="match status" value="1"/>
</dbReference>
<dbReference type="HAMAP" id="MF_00023">
    <property type="entry name" value="SmpB"/>
    <property type="match status" value="1"/>
</dbReference>
<dbReference type="InterPro" id="IPR023620">
    <property type="entry name" value="SmpB"/>
</dbReference>
<dbReference type="InterPro" id="IPR000037">
    <property type="entry name" value="SsrA-bd_prot"/>
</dbReference>
<dbReference type="InterPro" id="IPR020081">
    <property type="entry name" value="SsrA-bd_prot_CS"/>
</dbReference>
<dbReference type="NCBIfam" id="NF003843">
    <property type="entry name" value="PRK05422.1"/>
    <property type="match status" value="1"/>
</dbReference>
<dbReference type="NCBIfam" id="TIGR00086">
    <property type="entry name" value="smpB"/>
    <property type="match status" value="1"/>
</dbReference>
<dbReference type="PANTHER" id="PTHR30308:SF2">
    <property type="entry name" value="SSRA-BINDING PROTEIN"/>
    <property type="match status" value="1"/>
</dbReference>
<dbReference type="PANTHER" id="PTHR30308">
    <property type="entry name" value="TMRNA-BINDING COMPONENT OF TRANS-TRANSLATION TAGGING COMPLEX"/>
    <property type="match status" value="1"/>
</dbReference>
<dbReference type="Pfam" id="PF01668">
    <property type="entry name" value="SmpB"/>
    <property type="match status" value="1"/>
</dbReference>
<dbReference type="SUPFAM" id="SSF74982">
    <property type="entry name" value="Small protein B (SmpB)"/>
    <property type="match status" value="1"/>
</dbReference>
<dbReference type="PROSITE" id="PS01317">
    <property type="entry name" value="SSRP"/>
    <property type="match status" value="1"/>
</dbReference>
<organism>
    <name type="scientific">Lactobacillus helveticus (strain DPC 4571)</name>
    <dbReference type="NCBI Taxonomy" id="405566"/>
    <lineage>
        <taxon>Bacteria</taxon>
        <taxon>Bacillati</taxon>
        <taxon>Bacillota</taxon>
        <taxon>Bacilli</taxon>
        <taxon>Lactobacillales</taxon>
        <taxon>Lactobacillaceae</taxon>
        <taxon>Lactobacillus</taxon>
    </lineage>
</organism>
<name>SSRP_LACH4</name>
<proteinExistence type="inferred from homology"/>
<keyword id="KW-0963">Cytoplasm</keyword>
<keyword id="KW-0694">RNA-binding</keyword>
<accession>A8YTT9</accession>
<feature type="chain" id="PRO_0000331057" description="SsrA-binding protein">
    <location>
        <begin position="1"/>
        <end position="152"/>
    </location>
</feature>
<sequence>MKKEKDDNLIAQNKKARHDYFIKETVEAGIALTGTEIKSVRARRINLRDGYVQIYGGSAYLENVHISEYKQGNRYNHDPLRSRRLLLHKKEIARLAKAQSERGIAIIPLKVYLKHGFAKVLIGVGQGKKEYDKRQTIKERDQKREIRRKYGI</sequence>
<gene>
    <name evidence="1" type="primary">smpB</name>
    <name type="ordered locus">lhv_0473</name>
</gene>